<protein>
    <recommendedName>
        <fullName evidence="15">Ribosomal oxygenase 1</fullName>
    </recommendedName>
    <alternativeName>
        <fullName>60S ribosomal protein L8 histidine hydroxylase</fullName>
    </alternativeName>
    <alternativeName>
        <fullName>Bifunctional lysine-specific demethylase and histidyl-hydroxylase NO66</fullName>
        <ecNumber evidence="2">1.14.11.27</ecNumber>
        <ecNumber evidence="9">1.14.11.79</ecNumber>
    </alternativeName>
    <alternativeName>
        <fullName>Myc-associated protein with JmjC domain</fullName>
    </alternativeName>
    <alternativeName>
        <fullName evidence="13">Nucleolar protein 66</fullName>
        <shortName evidence="13">hsNO66</shortName>
    </alternativeName>
    <alternativeName>
        <fullName evidence="13">Ribosomal oxygenase NO66</fullName>
        <shortName evidence="13">ROX</shortName>
    </alternativeName>
</protein>
<keyword id="KW-0002">3D-structure</keyword>
<keyword id="KW-0007">Acetylation</keyword>
<keyword id="KW-0025">Alternative splicing</keyword>
<keyword id="KW-0156">Chromatin regulator</keyword>
<keyword id="KW-0223">Dioxygenase</keyword>
<keyword id="KW-0408">Iron</keyword>
<keyword id="KW-0479">Metal-binding</keyword>
<keyword id="KW-0539">Nucleus</keyword>
<keyword id="KW-0560">Oxidoreductase</keyword>
<keyword id="KW-0597">Phosphoprotein</keyword>
<keyword id="KW-1267">Proteomics identification</keyword>
<keyword id="KW-1185">Reference proteome</keyword>
<keyword id="KW-0678">Repressor</keyword>
<keyword id="KW-0804">Transcription</keyword>
<keyword id="KW-0805">Transcription regulation</keyword>
<organism>
    <name type="scientific">Homo sapiens</name>
    <name type="common">Human</name>
    <dbReference type="NCBI Taxonomy" id="9606"/>
    <lineage>
        <taxon>Eukaryota</taxon>
        <taxon>Metazoa</taxon>
        <taxon>Chordata</taxon>
        <taxon>Craniata</taxon>
        <taxon>Vertebrata</taxon>
        <taxon>Euteleostomi</taxon>
        <taxon>Mammalia</taxon>
        <taxon>Eutheria</taxon>
        <taxon>Euarchontoglires</taxon>
        <taxon>Primates</taxon>
        <taxon>Haplorrhini</taxon>
        <taxon>Catarrhini</taxon>
        <taxon>Hominidae</taxon>
        <taxon>Homo</taxon>
    </lineage>
</organism>
<dbReference type="EC" id="1.14.11.27" evidence="2"/>
<dbReference type="EC" id="1.14.11.79" evidence="9"/>
<dbReference type="EMBL" id="AY390535">
    <property type="protein sequence ID" value="AAR27292.1"/>
    <property type="molecule type" value="mRNA"/>
</dbReference>
<dbReference type="EMBL" id="AK025455">
    <property type="protein sequence ID" value="BAB15138.1"/>
    <property type="molecule type" value="mRNA"/>
</dbReference>
<dbReference type="EMBL" id="AK299994">
    <property type="protein sequence ID" value="BAG61814.1"/>
    <property type="molecule type" value="mRNA"/>
</dbReference>
<dbReference type="EMBL" id="AC005280">
    <property type="status" value="NOT_ANNOTATED_CDS"/>
    <property type="molecule type" value="Genomic_DNA"/>
</dbReference>
<dbReference type="EMBL" id="BC011350">
    <property type="protein sequence ID" value="AAH11350.1"/>
    <property type="molecule type" value="mRNA"/>
</dbReference>
<dbReference type="EMBL" id="BC071954">
    <property type="protein sequence ID" value="AAH71954.1"/>
    <property type="molecule type" value="mRNA"/>
</dbReference>
<dbReference type="CCDS" id="CCDS73660.1">
    <molecule id="Q9H6W3-1"/>
</dbReference>
<dbReference type="RefSeq" id="NP_078920.2">
    <molecule id="Q9H6W3-1"/>
    <property type="nucleotide sequence ID" value="NM_024644.5"/>
</dbReference>
<dbReference type="PDB" id="4CCJ">
    <property type="method" value="X-ray"/>
    <property type="resolution" value="2.15 A"/>
    <property type="chains" value="A/B/C/D=183-641"/>
</dbReference>
<dbReference type="PDB" id="4CCK">
    <property type="method" value="X-ray"/>
    <property type="resolution" value="2.15 A"/>
    <property type="chains" value="A/B/C/D=183-641"/>
</dbReference>
<dbReference type="PDB" id="4CCM">
    <property type="method" value="X-ray"/>
    <property type="resolution" value="2.51 A"/>
    <property type="chains" value="A/B=183-641"/>
</dbReference>
<dbReference type="PDB" id="4CCN">
    <property type="method" value="X-ray"/>
    <property type="resolution" value="2.23 A"/>
    <property type="chains" value="A/B=183-641"/>
</dbReference>
<dbReference type="PDB" id="4CCO">
    <property type="method" value="X-ray"/>
    <property type="resolution" value="2.30 A"/>
    <property type="chains" value="A/B=183-641"/>
</dbReference>
<dbReference type="PDB" id="4DIQ">
    <property type="method" value="X-ray"/>
    <property type="resolution" value="2.40 A"/>
    <property type="chains" value="A/B=167-641"/>
</dbReference>
<dbReference type="PDB" id="4E4H">
    <property type="method" value="X-ray"/>
    <property type="resolution" value="2.28 A"/>
    <property type="chains" value="A/B/C/D=183-641"/>
</dbReference>
<dbReference type="PDB" id="4Y33">
    <property type="method" value="X-ray"/>
    <property type="resolution" value="2.70 A"/>
    <property type="chains" value="A/B/C/D=176-641"/>
</dbReference>
<dbReference type="PDB" id="4Y3O">
    <property type="method" value="X-ray"/>
    <property type="resolution" value="2.20 A"/>
    <property type="chains" value="A/B=176-641"/>
</dbReference>
<dbReference type="PDB" id="4Y4R">
    <property type="method" value="X-ray"/>
    <property type="resolution" value="3.30 A"/>
    <property type="chains" value="A/B=176-525, A/B=541-641"/>
</dbReference>
<dbReference type="PDBsum" id="4CCJ"/>
<dbReference type="PDBsum" id="4CCK"/>
<dbReference type="PDBsum" id="4CCM"/>
<dbReference type="PDBsum" id="4CCN"/>
<dbReference type="PDBsum" id="4CCO"/>
<dbReference type="PDBsum" id="4DIQ"/>
<dbReference type="PDBsum" id="4E4H"/>
<dbReference type="PDBsum" id="4Y33"/>
<dbReference type="PDBsum" id="4Y3O"/>
<dbReference type="PDBsum" id="4Y4R"/>
<dbReference type="SMR" id="Q9H6W3"/>
<dbReference type="BioGRID" id="122818">
    <property type="interactions" value="74"/>
</dbReference>
<dbReference type="DIP" id="DIP-53768N"/>
<dbReference type="FunCoup" id="Q9H6W3">
    <property type="interactions" value="2238"/>
</dbReference>
<dbReference type="IntAct" id="Q9H6W3">
    <property type="interactions" value="47"/>
</dbReference>
<dbReference type="MINT" id="Q9H6W3"/>
<dbReference type="STRING" id="9606.ENSP00000477507"/>
<dbReference type="BindingDB" id="Q9H6W3"/>
<dbReference type="iPTMnet" id="Q9H6W3"/>
<dbReference type="PhosphoSitePlus" id="Q9H6W3"/>
<dbReference type="SwissPalm" id="Q9H6W3"/>
<dbReference type="BioMuta" id="RIOX1"/>
<dbReference type="DMDM" id="284018103"/>
<dbReference type="jPOST" id="Q9H6W3"/>
<dbReference type="MassIVE" id="Q9H6W3"/>
<dbReference type="PaxDb" id="9606-ENSP00000477507"/>
<dbReference type="PeptideAtlas" id="Q9H6W3"/>
<dbReference type="ProteomicsDB" id="81046">
    <molecule id="Q9H6W3-1"/>
</dbReference>
<dbReference type="ProteomicsDB" id="81047">
    <molecule id="Q9H6W3-2"/>
</dbReference>
<dbReference type="Pumba" id="Q9H6W3"/>
<dbReference type="ABCD" id="Q9H6W3">
    <property type="antibodies" value="1 sequenced antibody"/>
</dbReference>
<dbReference type="Antibodypedia" id="73399">
    <property type="antibodies" value="109 antibodies from 26 providers"/>
</dbReference>
<dbReference type="DNASU" id="79697"/>
<dbReference type="Ensembl" id="ENST00000304061.8">
    <molecule id="Q9H6W3-1"/>
    <property type="protein sequence ID" value="ENSP00000477507.1"/>
    <property type="gene ID" value="ENSG00000170468.8"/>
</dbReference>
<dbReference type="GeneID" id="79697"/>
<dbReference type="KEGG" id="hsa:79697"/>
<dbReference type="MANE-Select" id="ENST00000304061.8">
    <property type="protein sequence ID" value="ENSP00000477507.1"/>
    <property type="RefSeq nucleotide sequence ID" value="NM_024644.5"/>
    <property type="RefSeq protein sequence ID" value="NP_078920.2"/>
</dbReference>
<dbReference type="UCSC" id="uc032bfz.2">
    <molecule id="Q9H6W3-1"/>
    <property type="organism name" value="human"/>
</dbReference>
<dbReference type="AGR" id="HGNC:20968"/>
<dbReference type="CTD" id="79697"/>
<dbReference type="DisGeNET" id="79697"/>
<dbReference type="GeneCards" id="RIOX1"/>
<dbReference type="HGNC" id="HGNC:20968">
    <property type="gene designation" value="RIOX1"/>
</dbReference>
<dbReference type="HPA" id="ENSG00000170468">
    <property type="expression patterns" value="Low tissue specificity"/>
</dbReference>
<dbReference type="MIM" id="611919">
    <property type="type" value="gene"/>
</dbReference>
<dbReference type="neXtProt" id="NX_Q9H6W3"/>
<dbReference type="OpenTargets" id="ENSG00000170468"/>
<dbReference type="PharmGKB" id="PA134919088"/>
<dbReference type="VEuPathDB" id="HostDB:ENSG00000170468"/>
<dbReference type="eggNOG" id="KOG3706">
    <property type="taxonomic scope" value="Eukaryota"/>
</dbReference>
<dbReference type="GeneTree" id="ENSGT00390000000083"/>
<dbReference type="HOGENOM" id="CLU_013645_4_1_1"/>
<dbReference type="InParanoid" id="Q9H6W3"/>
<dbReference type="OMA" id="YLEYMGV"/>
<dbReference type="OrthoDB" id="425950at2759"/>
<dbReference type="PAN-GO" id="Q9H6W3">
    <property type="GO annotations" value="5 GO annotations based on evolutionary models"/>
</dbReference>
<dbReference type="PhylomeDB" id="Q9H6W3"/>
<dbReference type="BioCyc" id="MetaCyc:ENSG00000170468-MONOMER"/>
<dbReference type="PathwayCommons" id="Q9H6W3"/>
<dbReference type="Reactome" id="R-HSA-9629569">
    <property type="pathway name" value="Protein hydroxylation"/>
</dbReference>
<dbReference type="SignaLink" id="Q9H6W3"/>
<dbReference type="SIGNOR" id="Q9H6W3"/>
<dbReference type="BioGRID-ORCS" id="79697">
    <property type="hits" value="16 hits in 263 CRISPR screens"/>
</dbReference>
<dbReference type="CD-CODE" id="91857CE7">
    <property type="entry name" value="Nucleolus"/>
</dbReference>
<dbReference type="EvolutionaryTrace" id="Q9H6W3"/>
<dbReference type="GenomeRNAi" id="79697"/>
<dbReference type="Pharos" id="Q9H6W3">
    <property type="development level" value="Tbio"/>
</dbReference>
<dbReference type="PRO" id="PR:Q9H6W3"/>
<dbReference type="Proteomes" id="UP000005640">
    <property type="component" value="Chromosome 14"/>
</dbReference>
<dbReference type="RNAct" id="Q9H6W3">
    <property type="molecule type" value="protein"/>
</dbReference>
<dbReference type="Bgee" id="ENSG00000170468">
    <property type="expression patterns" value="Expressed in oocyte and 185 other cell types or tissues"/>
</dbReference>
<dbReference type="GO" id="GO:0005730">
    <property type="term" value="C:nucleolus"/>
    <property type="evidence" value="ECO:0000314"/>
    <property type="project" value="HPA"/>
</dbReference>
<dbReference type="GO" id="GO:0005654">
    <property type="term" value="C:nucleoplasm"/>
    <property type="evidence" value="ECO:0000304"/>
    <property type="project" value="Reactome"/>
</dbReference>
<dbReference type="GO" id="GO:0005634">
    <property type="term" value="C:nucleus"/>
    <property type="evidence" value="ECO:0000250"/>
    <property type="project" value="UniProtKB"/>
</dbReference>
<dbReference type="GO" id="GO:0016706">
    <property type="term" value="F:2-oxoglutarate-dependent dioxygenase activity"/>
    <property type="evidence" value="ECO:0000314"/>
    <property type="project" value="UniProtKB"/>
</dbReference>
<dbReference type="GO" id="GO:0051864">
    <property type="term" value="F:histone H3K36 demethylase activity"/>
    <property type="evidence" value="ECO:0000250"/>
    <property type="project" value="UniProtKB"/>
</dbReference>
<dbReference type="GO" id="GO:0140680">
    <property type="term" value="F:histone H3K36me/H3K36me2 demethylase activity"/>
    <property type="evidence" value="ECO:0007669"/>
    <property type="project" value="UniProtKB-EC"/>
</dbReference>
<dbReference type="GO" id="GO:0032453">
    <property type="term" value="F:histone H3K4 demethylase activity"/>
    <property type="evidence" value="ECO:0000318"/>
    <property type="project" value="GO_Central"/>
</dbReference>
<dbReference type="GO" id="GO:0034647">
    <property type="term" value="F:histone H3K4me/H3K4me2/H3K4me3 demethylase activity"/>
    <property type="evidence" value="ECO:0000250"/>
    <property type="project" value="UniProtKB"/>
</dbReference>
<dbReference type="GO" id="GO:0005506">
    <property type="term" value="F:iron ion binding"/>
    <property type="evidence" value="ECO:0000250"/>
    <property type="project" value="UniProtKB"/>
</dbReference>
<dbReference type="GO" id="GO:0036139">
    <property type="term" value="F:peptidyl-histidine dioxygenase activity"/>
    <property type="evidence" value="ECO:0000314"/>
    <property type="project" value="UniProtKB"/>
</dbReference>
<dbReference type="GO" id="GO:0140457">
    <property type="term" value="F:protein demethylase activity"/>
    <property type="evidence" value="ECO:0000314"/>
    <property type="project" value="UniProtKB"/>
</dbReference>
<dbReference type="GO" id="GO:0045892">
    <property type="term" value="P:negative regulation of DNA-templated transcription"/>
    <property type="evidence" value="ECO:0000250"/>
    <property type="project" value="UniProtKB"/>
</dbReference>
<dbReference type="GO" id="GO:0045668">
    <property type="term" value="P:negative regulation of osteoblast differentiation"/>
    <property type="evidence" value="ECO:0000250"/>
    <property type="project" value="UniProtKB"/>
</dbReference>
<dbReference type="GO" id="GO:0006282">
    <property type="term" value="P:regulation of DNA repair"/>
    <property type="evidence" value="ECO:0007669"/>
    <property type="project" value="Ensembl"/>
</dbReference>
<dbReference type="FunFam" id="2.60.120.650:FF:000013">
    <property type="entry name" value="Ribosomal oxygenase 1"/>
    <property type="match status" value="1"/>
</dbReference>
<dbReference type="FunFam" id="1.10.10.1500:FF:000001">
    <property type="entry name" value="ribosomal oxygenase 1 isoform X1"/>
    <property type="match status" value="1"/>
</dbReference>
<dbReference type="FunFam" id="3.90.930.40:FF:000001">
    <property type="entry name" value="ribosomal oxygenase 1 isoform X1"/>
    <property type="match status" value="1"/>
</dbReference>
<dbReference type="Gene3D" id="3.90.930.40">
    <property type="match status" value="1"/>
</dbReference>
<dbReference type="Gene3D" id="2.60.120.650">
    <property type="entry name" value="Cupin"/>
    <property type="match status" value="1"/>
</dbReference>
<dbReference type="Gene3D" id="1.10.10.1500">
    <property type="entry name" value="JmjC domain-containing ribosomal oxygenase (ROX), dimer domain"/>
    <property type="match status" value="1"/>
</dbReference>
<dbReference type="InterPro" id="IPR003347">
    <property type="entry name" value="JmjC_dom"/>
</dbReference>
<dbReference type="InterPro" id="IPR039994">
    <property type="entry name" value="NO66-like"/>
</dbReference>
<dbReference type="InterPro" id="IPR049043">
    <property type="entry name" value="RIOX1/NO66-like_C_WH"/>
</dbReference>
<dbReference type="PANTHER" id="PTHR13096">
    <property type="entry name" value="MINA53 MYC INDUCED NUCLEAR ANTIGEN"/>
    <property type="match status" value="1"/>
</dbReference>
<dbReference type="PANTHER" id="PTHR13096:SF8">
    <property type="entry name" value="RIBOSOMAL OXYGENASE 1"/>
    <property type="match status" value="1"/>
</dbReference>
<dbReference type="Pfam" id="PF08007">
    <property type="entry name" value="JmjC_2"/>
    <property type="match status" value="1"/>
</dbReference>
<dbReference type="Pfam" id="PF21233">
    <property type="entry name" value="RIOX1_C_WH"/>
    <property type="match status" value="1"/>
</dbReference>
<dbReference type="SUPFAM" id="SSF51197">
    <property type="entry name" value="Clavaminate synthase-like"/>
    <property type="match status" value="1"/>
</dbReference>
<dbReference type="PROSITE" id="PS51184">
    <property type="entry name" value="JMJC"/>
    <property type="match status" value="1"/>
</dbReference>
<reference key="1">
    <citation type="journal article" date="2004" name="Mol. Biol. Cell">
        <title>NO66, a highly conserved dual location protein in the nucleolus and in a special type of synchronously replicating chromatin.</title>
        <authorList>
            <person name="Eilbracht J."/>
            <person name="Reichenzeller M."/>
            <person name="Hergt M."/>
            <person name="Schnoelzer M."/>
            <person name="Heid H."/>
            <person name="Stoehr M."/>
            <person name="Franke W.W."/>
            <person name="Schmidt-Zachmann M.S."/>
        </authorList>
    </citation>
    <scope>NUCLEOTIDE SEQUENCE [MRNA] (ISOFORM 1)</scope>
    <scope>SUBCELLULAR LOCATION</scope>
    <scope>TISSUE SPECIFICITY</scope>
    <scope>VARIANTS ARG-17 AND ALA-364</scope>
</reference>
<reference key="2">
    <citation type="journal article" date="2004" name="Nat. Genet.">
        <title>Complete sequencing and characterization of 21,243 full-length human cDNAs.</title>
        <authorList>
            <person name="Ota T."/>
            <person name="Suzuki Y."/>
            <person name="Nishikawa T."/>
            <person name="Otsuki T."/>
            <person name="Sugiyama T."/>
            <person name="Irie R."/>
            <person name="Wakamatsu A."/>
            <person name="Hayashi K."/>
            <person name="Sato H."/>
            <person name="Nagai K."/>
            <person name="Kimura K."/>
            <person name="Makita H."/>
            <person name="Sekine M."/>
            <person name="Obayashi M."/>
            <person name="Nishi T."/>
            <person name="Shibahara T."/>
            <person name="Tanaka T."/>
            <person name="Ishii S."/>
            <person name="Yamamoto J."/>
            <person name="Saito K."/>
            <person name="Kawai Y."/>
            <person name="Isono Y."/>
            <person name="Nakamura Y."/>
            <person name="Nagahari K."/>
            <person name="Murakami K."/>
            <person name="Yasuda T."/>
            <person name="Iwayanagi T."/>
            <person name="Wagatsuma M."/>
            <person name="Shiratori A."/>
            <person name="Sudo H."/>
            <person name="Hosoiri T."/>
            <person name="Kaku Y."/>
            <person name="Kodaira H."/>
            <person name="Kondo H."/>
            <person name="Sugawara M."/>
            <person name="Takahashi M."/>
            <person name="Kanda K."/>
            <person name="Yokoi T."/>
            <person name="Furuya T."/>
            <person name="Kikkawa E."/>
            <person name="Omura Y."/>
            <person name="Abe K."/>
            <person name="Kamihara K."/>
            <person name="Katsuta N."/>
            <person name="Sato K."/>
            <person name="Tanikawa M."/>
            <person name="Yamazaki M."/>
            <person name="Ninomiya K."/>
            <person name="Ishibashi T."/>
            <person name="Yamashita H."/>
            <person name="Murakawa K."/>
            <person name="Fujimori K."/>
            <person name="Tanai H."/>
            <person name="Kimata M."/>
            <person name="Watanabe M."/>
            <person name="Hiraoka S."/>
            <person name="Chiba Y."/>
            <person name="Ishida S."/>
            <person name="Ono Y."/>
            <person name="Takiguchi S."/>
            <person name="Watanabe S."/>
            <person name="Yosida M."/>
            <person name="Hotuta T."/>
            <person name="Kusano J."/>
            <person name="Kanehori K."/>
            <person name="Takahashi-Fujii A."/>
            <person name="Hara H."/>
            <person name="Tanase T.-O."/>
            <person name="Nomura Y."/>
            <person name="Togiya S."/>
            <person name="Komai F."/>
            <person name="Hara R."/>
            <person name="Takeuchi K."/>
            <person name="Arita M."/>
            <person name="Imose N."/>
            <person name="Musashino K."/>
            <person name="Yuuki H."/>
            <person name="Oshima A."/>
            <person name="Sasaki N."/>
            <person name="Aotsuka S."/>
            <person name="Yoshikawa Y."/>
            <person name="Matsunawa H."/>
            <person name="Ichihara T."/>
            <person name="Shiohata N."/>
            <person name="Sano S."/>
            <person name="Moriya S."/>
            <person name="Momiyama H."/>
            <person name="Satoh N."/>
            <person name="Takami S."/>
            <person name="Terashima Y."/>
            <person name="Suzuki O."/>
            <person name="Nakagawa S."/>
            <person name="Senoh A."/>
            <person name="Mizoguchi H."/>
            <person name="Goto Y."/>
            <person name="Shimizu F."/>
            <person name="Wakebe H."/>
            <person name="Hishigaki H."/>
            <person name="Watanabe T."/>
            <person name="Sugiyama A."/>
            <person name="Takemoto M."/>
            <person name="Kawakami B."/>
            <person name="Yamazaki M."/>
            <person name="Watanabe K."/>
            <person name="Kumagai A."/>
            <person name="Itakura S."/>
            <person name="Fukuzumi Y."/>
            <person name="Fujimori Y."/>
            <person name="Komiyama M."/>
            <person name="Tashiro H."/>
            <person name="Tanigami A."/>
            <person name="Fujiwara T."/>
            <person name="Ono T."/>
            <person name="Yamada K."/>
            <person name="Fujii Y."/>
            <person name="Ozaki K."/>
            <person name="Hirao M."/>
            <person name="Ohmori Y."/>
            <person name="Kawabata A."/>
            <person name="Hikiji T."/>
            <person name="Kobatake N."/>
            <person name="Inagaki H."/>
            <person name="Ikema Y."/>
            <person name="Okamoto S."/>
            <person name="Okitani R."/>
            <person name="Kawakami T."/>
            <person name="Noguchi S."/>
            <person name="Itoh T."/>
            <person name="Shigeta K."/>
            <person name="Senba T."/>
            <person name="Matsumura K."/>
            <person name="Nakajima Y."/>
            <person name="Mizuno T."/>
            <person name="Morinaga M."/>
            <person name="Sasaki M."/>
            <person name="Togashi T."/>
            <person name="Oyama M."/>
            <person name="Hata H."/>
            <person name="Watanabe M."/>
            <person name="Komatsu T."/>
            <person name="Mizushima-Sugano J."/>
            <person name="Satoh T."/>
            <person name="Shirai Y."/>
            <person name="Takahashi Y."/>
            <person name="Nakagawa K."/>
            <person name="Okumura K."/>
            <person name="Nagase T."/>
            <person name="Nomura N."/>
            <person name="Kikuchi H."/>
            <person name="Masuho Y."/>
            <person name="Yamashita R."/>
            <person name="Nakai K."/>
            <person name="Yada T."/>
            <person name="Nakamura Y."/>
            <person name="Ohara O."/>
            <person name="Isogai T."/>
            <person name="Sugano S."/>
        </authorList>
    </citation>
    <scope>NUCLEOTIDE SEQUENCE [LARGE SCALE MRNA] (ISOFORMS 1 AND 2)</scope>
    <scope>VARIANTS ARG-17 AND ALA-364</scope>
</reference>
<reference key="3">
    <citation type="journal article" date="2003" name="Nature">
        <title>The DNA sequence and analysis of human chromosome 14.</title>
        <authorList>
            <person name="Heilig R."/>
            <person name="Eckenberg R."/>
            <person name="Petit J.-L."/>
            <person name="Fonknechten N."/>
            <person name="Da Silva C."/>
            <person name="Cattolico L."/>
            <person name="Levy M."/>
            <person name="Barbe V."/>
            <person name="De Berardinis V."/>
            <person name="Ureta-Vidal A."/>
            <person name="Pelletier E."/>
            <person name="Vico V."/>
            <person name="Anthouard V."/>
            <person name="Rowen L."/>
            <person name="Madan A."/>
            <person name="Qin S."/>
            <person name="Sun H."/>
            <person name="Du H."/>
            <person name="Pepin K."/>
            <person name="Artiguenave F."/>
            <person name="Robert C."/>
            <person name="Cruaud C."/>
            <person name="Bruels T."/>
            <person name="Jaillon O."/>
            <person name="Friedlander L."/>
            <person name="Samson G."/>
            <person name="Brottier P."/>
            <person name="Cure S."/>
            <person name="Segurens B."/>
            <person name="Aniere F."/>
            <person name="Samain S."/>
            <person name="Crespeau H."/>
            <person name="Abbasi N."/>
            <person name="Aiach N."/>
            <person name="Boscus D."/>
            <person name="Dickhoff R."/>
            <person name="Dors M."/>
            <person name="Dubois I."/>
            <person name="Friedman C."/>
            <person name="Gouyvenoux M."/>
            <person name="James R."/>
            <person name="Madan A."/>
            <person name="Mairey-Estrada B."/>
            <person name="Mangenot S."/>
            <person name="Martins N."/>
            <person name="Menard M."/>
            <person name="Oztas S."/>
            <person name="Ratcliffe A."/>
            <person name="Shaffer T."/>
            <person name="Trask B."/>
            <person name="Vacherie B."/>
            <person name="Bellemere C."/>
            <person name="Belser C."/>
            <person name="Besnard-Gonnet M."/>
            <person name="Bartol-Mavel D."/>
            <person name="Boutard M."/>
            <person name="Briez-Silla S."/>
            <person name="Combette S."/>
            <person name="Dufosse-Laurent V."/>
            <person name="Ferron C."/>
            <person name="Lechaplais C."/>
            <person name="Louesse C."/>
            <person name="Muselet D."/>
            <person name="Magdelenat G."/>
            <person name="Pateau E."/>
            <person name="Petit E."/>
            <person name="Sirvain-Trukniewicz P."/>
            <person name="Trybou A."/>
            <person name="Vega-Czarny N."/>
            <person name="Bataille E."/>
            <person name="Bluet E."/>
            <person name="Bordelais I."/>
            <person name="Dubois M."/>
            <person name="Dumont C."/>
            <person name="Guerin T."/>
            <person name="Haffray S."/>
            <person name="Hammadi R."/>
            <person name="Muanga J."/>
            <person name="Pellouin V."/>
            <person name="Robert D."/>
            <person name="Wunderle E."/>
            <person name="Gauguet G."/>
            <person name="Roy A."/>
            <person name="Sainte-Marthe L."/>
            <person name="Verdier J."/>
            <person name="Verdier-Discala C."/>
            <person name="Hillier L.W."/>
            <person name="Fulton L."/>
            <person name="McPherson J."/>
            <person name="Matsuda F."/>
            <person name="Wilson R."/>
            <person name="Scarpelli C."/>
            <person name="Gyapay G."/>
            <person name="Wincker P."/>
            <person name="Saurin W."/>
            <person name="Quetier F."/>
            <person name="Waterston R."/>
            <person name="Hood L."/>
            <person name="Weissenbach J."/>
        </authorList>
    </citation>
    <scope>NUCLEOTIDE SEQUENCE [LARGE SCALE GENOMIC DNA]</scope>
</reference>
<reference key="4">
    <citation type="journal article" date="2004" name="Genome Res.">
        <title>The status, quality, and expansion of the NIH full-length cDNA project: the Mammalian Gene Collection (MGC).</title>
        <authorList>
            <consortium name="The MGC Project Team"/>
        </authorList>
    </citation>
    <scope>NUCLEOTIDE SEQUENCE [LARGE SCALE MRNA] (ISOFORM 1)</scope>
    <scope>VARIANTS ARG-17 AND ALA-364</scope>
    <source>
        <tissue>Lymph</tissue>
        <tissue>Mammary gland</tissue>
    </source>
</reference>
<reference key="5">
    <citation type="journal article" date="2007" name="Mol. Cancer Ther.">
        <title>Identification of Myc-associated protein with JmjC domain as a novel therapeutic target oncogene for lung cancer.</title>
        <authorList>
            <person name="Suzuki C."/>
            <person name="Takahashi K."/>
            <person name="Hayama S."/>
            <person name="Ishikawa N."/>
            <person name="Kato T."/>
            <person name="Ito T."/>
            <person name="Tsuchiya E."/>
            <person name="Nakamura Y."/>
            <person name="Daigo Y."/>
        </authorList>
    </citation>
    <scope>FUNCTION</scope>
    <scope>INTERACTION WITH MYC</scope>
    <scope>SUBCELLULAR LOCATION</scope>
    <scope>TISSUE SPECIFICITY</scope>
</reference>
<reference key="6">
    <citation type="journal article" date="2008" name="Proc. Natl. Acad. Sci. U.S.A.">
        <title>A quantitative atlas of mitotic phosphorylation.</title>
        <authorList>
            <person name="Dephoure N."/>
            <person name="Zhou C."/>
            <person name="Villen J."/>
            <person name="Beausoleil S.A."/>
            <person name="Bakalarski C.E."/>
            <person name="Elledge S.J."/>
            <person name="Gygi S.P."/>
        </authorList>
    </citation>
    <scope>PHOSPHORYLATION [LARGE SCALE ANALYSIS] AT SER-109</scope>
    <scope>IDENTIFICATION BY MASS SPECTROMETRY [LARGE SCALE ANALYSIS]</scope>
    <source>
        <tissue>Cervix carcinoma</tissue>
    </source>
</reference>
<reference key="7">
    <citation type="journal article" date="2009" name="Sci. Signal.">
        <title>Quantitative phosphoproteomic analysis of T cell receptor signaling reveals system-wide modulation of protein-protein interactions.</title>
        <authorList>
            <person name="Mayya V."/>
            <person name="Lundgren D.H."/>
            <person name="Hwang S.-I."/>
            <person name="Rezaul K."/>
            <person name="Wu L."/>
            <person name="Eng J.K."/>
            <person name="Rodionov V."/>
            <person name="Han D.K."/>
        </authorList>
    </citation>
    <scope>PHOSPHORYLATION [LARGE SCALE ANALYSIS] AT SER-109</scope>
    <scope>IDENTIFICATION BY MASS SPECTROMETRY [LARGE SCALE ANALYSIS]</scope>
    <source>
        <tissue>Leukemic T-cell</tissue>
    </source>
</reference>
<reference key="8">
    <citation type="journal article" date="2012" name="Nat. Struct. Mol. Biol.">
        <title>Polycomb PHF19 binds H3K36me3 and recruits PRC2 and demethylase NO66 to embryonic stem cell genes during differentiation.</title>
        <authorList>
            <person name="Brien G.L."/>
            <person name="Gambero G."/>
            <person name="O'Connell D.J."/>
            <person name="Jerman E."/>
            <person name="Turner S.A."/>
            <person name="Egan C.M."/>
            <person name="Dunne E.J."/>
            <person name="Jurgens M.C."/>
            <person name="Wynne K."/>
            <person name="Piao L."/>
            <person name="Lohan A.J."/>
            <person name="Ferguson N."/>
            <person name="Shi X."/>
            <person name="Sinha K.M."/>
            <person name="Loftus B.J."/>
            <person name="Cagney G."/>
            <person name="Bracken A.P."/>
        </authorList>
    </citation>
    <scope>INTERACTION WITH PHF19</scope>
</reference>
<reference key="9">
    <citation type="journal article" date="2012" name="Nat. Chem. Biol.">
        <title>Oxygenase-catalyzed ribosome hydroxylation occurs in prokaryotes and humans.</title>
        <authorList>
            <person name="Ge W."/>
            <person name="Wolf A."/>
            <person name="Feng T."/>
            <person name="Ho C.H."/>
            <person name="Sekirnik R."/>
            <person name="Zayer A."/>
            <person name="Granatino N."/>
            <person name="Cockman M.E."/>
            <person name="Loenarz C."/>
            <person name="Loik N.D."/>
            <person name="Hardy A.P."/>
            <person name="Claridge T.D."/>
            <person name="Hamed R.B."/>
            <person name="Chowdhury R."/>
            <person name="Gong L."/>
            <person name="Robinson C.V."/>
            <person name="Trudgian D.C."/>
            <person name="Jiang M."/>
            <person name="Mackeen M.M."/>
            <person name="McCullagh J.S."/>
            <person name="Gordiyenko Y."/>
            <person name="Thalhammer A."/>
            <person name="Yamamoto A."/>
            <person name="Yang M."/>
            <person name="Liu-Yi P."/>
            <person name="Zhang Z."/>
            <person name="Schmidt-Zachmann M."/>
            <person name="Kessler B.M."/>
            <person name="Ratcliffe P.J."/>
            <person name="Preston G.M."/>
            <person name="Coleman M.L."/>
            <person name="Schofield C.J."/>
        </authorList>
    </citation>
    <scope>FUNCTION AS RPL8 HYDROXYLASE</scope>
    <scope>CATALYTIC ACTIVITY</scope>
</reference>
<reference key="10">
    <citation type="journal article" date="2012" name="Proc. Natl. Acad. Sci. U.S.A.">
        <title>N-terminal acetylome analyses and functional insights of the N-terminal acetyltransferase NatB.</title>
        <authorList>
            <person name="Van Damme P."/>
            <person name="Lasa M."/>
            <person name="Polevoda B."/>
            <person name="Gazquez C."/>
            <person name="Elosegui-Artola A."/>
            <person name="Kim D.S."/>
            <person name="De Juan-Pardo E."/>
            <person name="Demeyer K."/>
            <person name="Hole K."/>
            <person name="Larrea E."/>
            <person name="Timmerman E."/>
            <person name="Prieto J."/>
            <person name="Arnesen T."/>
            <person name="Sherman F."/>
            <person name="Gevaert K."/>
            <person name="Aldabe R."/>
        </authorList>
    </citation>
    <scope>ACETYLATION [LARGE SCALE ANALYSIS] AT MET-1</scope>
    <scope>IDENTIFICATION BY MASS SPECTROMETRY [LARGE SCALE ANALYSIS]</scope>
</reference>
<reference key="11">
    <citation type="journal article" date="2013" name="J. Proteome Res.">
        <title>Toward a comprehensive characterization of a human cancer cell phosphoproteome.</title>
        <authorList>
            <person name="Zhou H."/>
            <person name="Di Palma S."/>
            <person name="Preisinger C."/>
            <person name="Peng M."/>
            <person name="Polat A.N."/>
            <person name="Heck A.J."/>
            <person name="Mohammed S."/>
        </authorList>
    </citation>
    <scope>PHOSPHORYLATION [LARGE SCALE ANALYSIS] AT SER-109</scope>
    <scope>IDENTIFICATION BY MASS SPECTROMETRY [LARGE SCALE ANALYSIS]</scope>
    <source>
        <tissue>Cervix carcinoma</tissue>
        <tissue>Erythroleukemia</tissue>
    </source>
</reference>
<reference key="12">
    <citation type="journal article" date="2022" name="Bone Res.">
        <title>RIOX1-demethylated cGAS regulates ionizing radiation-elicited DNA repair.</title>
        <authorList>
            <person name="Xiao Y."/>
            <person name="Li J."/>
            <person name="Liao X."/>
            <person name="He Y."/>
            <person name="He T."/>
            <person name="Yang C."/>
            <person name="Jiang L."/>
            <person name="Jeon S.M."/>
            <person name="Lee J.H."/>
            <person name="Chen Y."/>
            <person name="Liu R."/>
            <person name="Chen Q."/>
        </authorList>
    </citation>
    <scope>FUNCTION</scope>
    <scope>CATALYTIC ACTIVITY</scope>
</reference>
<comment type="function">
    <text evidence="2 8 9">Oxygenase that can act as both a histone lysine demethylase and a ribosomal histidine hydroxylase (PubMed:23103944). Specifically demethylates 'Lys-4' (H3K4me) and 'Lys-36' (H3K36me) of histone H3, thereby playing a central role in histone code (By similarity). Preferentially demethylates trimethylated H3 'Lys-4' (H3K4me3) and monomethylated H3 'Lys-4' (H3K4me1) residues, while it has weaker activity for dimethylated H3 'Lys-36' (H3K36me2) (By similarity). Acts as a regulator of osteoblast differentiation via its interaction with SP7/OSX by demethylating H3K4me and H3K36me, thereby inhibiting SP7/OSX-mediated promoter activation (By similarity). Also catalyzes demethylation of non-histone proteins, such as CGAS: demethylation of monomethylated CGAS promotes interaction between CGAS and PARP1, followed by PARP1 inactivation (By similarity). Also catalyzes the hydroxylation of 60S ribosomal protein L8 on 'His-216', thereby playing a role in ribosome biogenesis (PubMed:23103944). Participates in MYC-induced transcriptional activation (PubMed:17308053).</text>
</comment>
<comment type="catalytic activity">
    <reaction evidence="2">
        <text>N(6),N(6)-dimethyl-L-lysyl(36)-[histone H3] + 2 2-oxoglutarate + 2 O2 = L-lysyl(36)-[histone H3] + 2 formaldehyde + 2 succinate + 2 CO2</text>
        <dbReference type="Rhea" id="RHEA:42032"/>
        <dbReference type="Rhea" id="RHEA-COMP:9785"/>
        <dbReference type="Rhea" id="RHEA-COMP:9787"/>
        <dbReference type="ChEBI" id="CHEBI:15379"/>
        <dbReference type="ChEBI" id="CHEBI:16526"/>
        <dbReference type="ChEBI" id="CHEBI:16810"/>
        <dbReference type="ChEBI" id="CHEBI:16842"/>
        <dbReference type="ChEBI" id="CHEBI:29969"/>
        <dbReference type="ChEBI" id="CHEBI:30031"/>
        <dbReference type="ChEBI" id="CHEBI:61976"/>
        <dbReference type="EC" id="1.14.11.27"/>
    </reaction>
    <physiologicalReaction direction="left-to-right" evidence="2">
        <dbReference type="Rhea" id="RHEA:42033"/>
    </physiologicalReaction>
</comment>
<comment type="catalytic activity">
    <reaction evidence="11">
        <text>N(6)-methyl-L-lysyl-[protein] + 2-oxoglutarate + O2 = L-lysyl-[protein] + formaldehyde + succinate + CO2</text>
        <dbReference type="Rhea" id="RHEA:60924"/>
        <dbReference type="Rhea" id="RHEA-COMP:9752"/>
        <dbReference type="Rhea" id="RHEA-COMP:13053"/>
        <dbReference type="ChEBI" id="CHEBI:15379"/>
        <dbReference type="ChEBI" id="CHEBI:16526"/>
        <dbReference type="ChEBI" id="CHEBI:16810"/>
        <dbReference type="ChEBI" id="CHEBI:16842"/>
        <dbReference type="ChEBI" id="CHEBI:29969"/>
        <dbReference type="ChEBI" id="CHEBI:30031"/>
        <dbReference type="ChEBI" id="CHEBI:61929"/>
    </reaction>
    <physiologicalReaction direction="left-to-right" evidence="11">
        <dbReference type="Rhea" id="RHEA:60925"/>
    </physiologicalReaction>
</comment>
<comment type="catalytic activity">
    <reaction evidence="9">
        <text>L-histidyl-[protein] + 2-oxoglutarate + O2 = (3S)-3-hydroxy-L-histidyl-[protein] + succinate + CO2</text>
        <dbReference type="Rhea" id="RHEA:54256"/>
        <dbReference type="Rhea" id="RHEA-COMP:9745"/>
        <dbReference type="Rhea" id="RHEA-COMP:13840"/>
        <dbReference type="ChEBI" id="CHEBI:15379"/>
        <dbReference type="ChEBI" id="CHEBI:16526"/>
        <dbReference type="ChEBI" id="CHEBI:16810"/>
        <dbReference type="ChEBI" id="CHEBI:29979"/>
        <dbReference type="ChEBI" id="CHEBI:30031"/>
        <dbReference type="ChEBI" id="CHEBI:138021"/>
        <dbReference type="EC" id="1.14.11.79"/>
    </reaction>
    <physiologicalReaction direction="left-to-right" evidence="9">
        <dbReference type="Rhea" id="RHEA:54257"/>
    </physiologicalReaction>
</comment>
<comment type="cofactor">
    <cofactor evidence="2">
        <name>Fe(2+)</name>
        <dbReference type="ChEBI" id="CHEBI:29033"/>
    </cofactor>
    <text evidence="2">Binds 1 Fe(2+) ion per subunit.</text>
</comment>
<comment type="subunit">
    <text evidence="2 8 10">Interacts with SP7/OSX; the interaction is direct (By similarity). Interacts with MYC (PubMed:17308053). Interacts with PHF19; leading to its recruitment to H3K36me3 sites (PubMed:23160351).</text>
</comment>
<comment type="interaction">
    <interactant intactId="EBI-2513645">
        <id>Q9H6W3</id>
    </interactant>
    <interactant intactId="EBI-7608836">
        <id>Q8VI67</id>
        <label>Sp7</label>
    </interactant>
    <organismsDiffer>true</organismsDiffer>
    <experiments>6</experiments>
</comment>
<comment type="subcellular location">
    <subcellularLocation>
        <location evidence="6 8">Nucleus</location>
        <location evidence="6 8">Nucleolus</location>
    </subcellularLocation>
    <subcellularLocation>
        <location evidence="8">Nucleus</location>
        <location evidence="8">Nucleoplasm</location>
    </subcellularLocation>
    <text evidence="6">Granular part of nucleoli (PubMed:14742713). Nucleoplasm, nucleoplasmic foci, some of them associated with nucleoli (PubMed:14742713).</text>
</comment>
<comment type="alternative products">
    <event type="alternative splicing"/>
    <isoform>
        <id>Q9H6W3-1</id>
        <name>1</name>
        <sequence type="displayed"/>
    </isoform>
    <isoform>
        <id>Q9H6W3-2</id>
        <name>2</name>
        <sequence type="described" ref="VSP_038663"/>
    </isoform>
</comment>
<comment type="tissue specificity">
    <text evidence="6 8">Widely expressed. Overexpressed in lung carcinomas.</text>
</comment>
<comment type="similarity">
    <text evidence="15">Belongs to the ROX family. NO66 subfamily.</text>
</comment>
<accession>Q9H6W3</accession>
<accession>B4DT02</accession>
<gene>
    <name evidence="14 16" type="primary">RIOX1</name>
    <name evidence="16" type="synonym">C14orf169</name>
    <name type="synonym">MAPJD</name>
    <name evidence="13" type="synonym">NO66</name>
</gene>
<evidence type="ECO:0000250" key="1">
    <source>
        <dbReference type="UniProtKB" id="D3ZU57"/>
    </source>
</evidence>
<evidence type="ECO:0000250" key="2">
    <source>
        <dbReference type="UniProtKB" id="Q9JJF3"/>
    </source>
</evidence>
<evidence type="ECO:0000255" key="3">
    <source>
        <dbReference type="PROSITE-ProRule" id="PRU00538"/>
    </source>
</evidence>
<evidence type="ECO:0000256" key="4">
    <source>
        <dbReference type="SAM" id="MobiDB-lite"/>
    </source>
</evidence>
<evidence type="ECO:0000269" key="5">
    <source>
    </source>
</evidence>
<evidence type="ECO:0000269" key="6">
    <source>
    </source>
</evidence>
<evidence type="ECO:0000269" key="7">
    <source>
    </source>
</evidence>
<evidence type="ECO:0000269" key="8">
    <source>
    </source>
</evidence>
<evidence type="ECO:0000269" key="9">
    <source>
    </source>
</evidence>
<evidence type="ECO:0000269" key="10">
    <source>
    </source>
</evidence>
<evidence type="ECO:0000269" key="11">
    <source>
    </source>
</evidence>
<evidence type="ECO:0000303" key="12">
    <source>
    </source>
</evidence>
<evidence type="ECO:0000303" key="13">
    <source>
    </source>
</evidence>
<evidence type="ECO:0000303" key="14">
    <source>
    </source>
</evidence>
<evidence type="ECO:0000305" key="15"/>
<evidence type="ECO:0000312" key="16">
    <source>
        <dbReference type="HGNC" id="HGNC:20968"/>
    </source>
</evidence>
<evidence type="ECO:0007744" key="17">
    <source>
    </source>
</evidence>
<evidence type="ECO:0007744" key="18">
    <source>
    </source>
</evidence>
<evidence type="ECO:0007744" key="19">
    <source>
    </source>
</evidence>
<evidence type="ECO:0007744" key="20">
    <source>
    </source>
</evidence>
<evidence type="ECO:0007829" key="21">
    <source>
        <dbReference type="PDB" id="4CCJ"/>
    </source>
</evidence>
<evidence type="ECO:0007829" key="22">
    <source>
        <dbReference type="PDB" id="4CCM"/>
    </source>
</evidence>
<evidence type="ECO:0007829" key="23">
    <source>
        <dbReference type="PDB" id="4DIQ"/>
    </source>
</evidence>
<evidence type="ECO:0007829" key="24">
    <source>
        <dbReference type="PDB" id="4E4H"/>
    </source>
</evidence>
<evidence type="ECO:0007829" key="25">
    <source>
        <dbReference type="PDB" id="4Y3O"/>
    </source>
</evidence>
<proteinExistence type="evidence at protein level"/>
<sequence length="641" mass="71086">MDGLQASAGPLRRGRPKRRRKPQPHSGSVLALPLRSRKIRKQLRSVVSRMAALRTQTLPSENSEESRVESTADDLGDALPGGAAVAAVPDAARREPYGHLGPAELLEASPAARSLQTPSARLVPASAPPARLVEVPAAPVRVVETSALLCTAQHLAAVQSSGAPATASGPQVDNTGGEPAWDSPLRRVLAELNRIPSSRRRAARLFEWLIAPMPPDHFYRRLWEREAVLVRRQDHTYYQGLFSTADLDSMLRNEEVQFGQHLDAARYINGRRETLNPPGRALPAAAWSLYQAGCSLRLLCPQAFSTTVWQFLAVLQEQFGSMAGSNVYLTPPNSQGFAPHYDDIEAFVLQLEGRKLWRVYRPRVPTEELALTSSPNFSQDDLGEPVLQTVLEPGDLLYFPRGFIHQAECQDGVHSLHLTLSTYQRNTWGDFLEAILPLAVQAAMEENVEFRRGLPRDFMDYMGAQHSDSKDPRRTAFMEKVRVLVARLGHFAPVDAVADQRAKDFIHDSLPPVLTDRERALSVYGLPIRWEAGEPVNVGAQLTTETEVHMLQDGIARLVGEGGHLFLYYTVENSRVYHLEEPKCLEIYPQQADAMELLLGSYPEFVRVGDLPCDSVEDQLSLATTLYDKGLLLTKMPLALN</sequence>
<name>RIOX1_HUMAN</name>
<feature type="chain" id="PRO_0000264613" description="Ribosomal oxygenase 1">
    <location>
        <begin position="1"/>
        <end position="641"/>
    </location>
</feature>
<feature type="domain" description="JmjC" evidence="3">
    <location>
        <begin position="294"/>
        <end position="439"/>
    </location>
</feature>
<feature type="region of interest" description="Disordered" evidence="4">
    <location>
        <begin position="1"/>
        <end position="35"/>
    </location>
</feature>
<feature type="region of interest" description="Disordered" evidence="4">
    <location>
        <begin position="54"/>
        <end position="80"/>
    </location>
</feature>
<feature type="compositionally biased region" description="Basic residues" evidence="4">
    <location>
        <begin position="12"/>
        <end position="23"/>
    </location>
</feature>
<feature type="binding site" evidence="3">
    <location>
        <position position="340"/>
    </location>
    <ligand>
        <name>Fe cation</name>
        <dbReference type="ChEBI" id="CHEBI:24875"/>
        <note>catalytic</note>
    </ligand>
</feature>
<feature type="binding site" evidence="3">
    <location>
        <position position="342"/>
    </location>
    <ligand>
        <name>Fe cation</name>
        <dbReference type="ChEBI" id="CHEBI:24875"/>
        <note>catalytic</note>
    </ligand>
</feature>
<feature type="binding site" evidence="3">
    <location>
        <position position="405"/>
    </location>
    <ligand>
        <name>Fe cation</name>
        <dbReference type="ChEBI" id="CHEBI:24875"/>
        <note>catalytic</note>
    </ligand>
</feature>
<feature type="modified residue" description="N-acetylmethionine" evidence="19">
    <location>
        <position position="1"/>
    </location>
</feature>
<feature type="modified residue" description="Phosphoserine" evidence="1">
    <location>
        <position position="60"/>
    </location>
</feature>
<feature type="modified residue" description="Phosphoserine" evidence="1">
    <location>
        <position position="63"/>
    </location>
</feature>
<feature type="modified residue" description="Phosphoserine" evidence="17 18 20">
    <location>
        <position position="109"/>
    </location>
</feature>
<feature type="splice variant" id="VSP_038663" description="In isoform 2." evidence="12">
    <location>
        <begin position="1"/>
        <end position="212"/>
    </location>
</feature>
<feature type="sequence variant" id="VAR_062422" description="In dbSNP:rs10144469." evidence="5 6 7">
    <original>K</original>
    <variation>R</variation>
    <location>
        <position position="17"/>
    </location>
</feature>
<feature type="sequence variant" id="VAR_057819" description="In dbSNP:rs758109.">
    <original>F</original>
    <variation>S</variation>
    <location>
        <position position="218"/>
    </location>
</feature>
<feature type="sequence variant" id="VAR_060191" description="In dbSNP:rs34970526.">
    <original>Q</original>
    <variation>H</variation>
    <location>
        <position position="239"/>
    </location>
</feature>
<feature type="sequence variant" id="VAR_062423" description="In dbSNP:rs3813563." evidence="5 6 7">
    <original>V</original>
    <variation>A</variation>
    <location>
        <position position="364"/>
    </location>
</feature>
<feature type="sequence conflict" description="In Ref. 2; BAG61814." evidence="15" ref="2">
    <original>E</original>
    <variation>G</variation>
    <location>
        <position position="392"/>
    </location>
</feature>
<feature type="helix" evidence="21">
    <location>
        <begin position="184"/>
        <end position="193"/>
    </location>
</feature>
<feature type="helix" evidence="21">
    <location>
        <begin position="198"/>
        <end position="210"/>
    </location>
</feature>
<feature type="helix" evidence="21">
    <location>
        <begin position="215"/>
        <end position="221"/>
    </location>
</feature>
<feature type="turn" evidence="21">
    <location>
        <begin position="222"/>
        <end position="225"/>
    </location>
</feature>
<feature type="strand" evidence="21">
    <location>
        <begin position="228"/>
        <end position="230"/>
    </location>
</feature>
<feature type="turn" evidence="21">
    <location>
        <begin position="235"/>
        <end position="240"/>
    </location>
</feature>
<feature type="helix" evidence="21">
    <location>
        <begin position="244"/>
        <end position="253"/>
    </location>
</feature>
<feature type="turn" evidence="21">
    <location>
        <begin position="259"/>
        <end position="261"/>
    </location>
</feature>
<feature type="strand" evidence="21">
    <location>
        <begin position="262"/>
        <end position="268"/>
    </location>
</feature>
<feature type="strand" evidence="21">
    <location>
        <begin position="271"/>
        <end position="274"/>
    </location>
</feature>
<feature type="strand" evidence="21">
    <location>
        <begin position="278"/>
        <end position="280"/>
    </location>
</feature>
<feature type="helix" evidence="21">
    <location>
        <begin position="283"/>
        <end position="291"/>
    </location>
</feature>
<feature type="strand" evidence="21">
    <location>
        <begin position="295"/>
        <end position="299"/>
    </location>
</feature>
<feature type="helix" evidence="21">
    <location>
        <begin position="301"/>
        <end position="303"/>
    </location>
</feature>
<feature type="helix" evidence="21">
    <location>
        <begin position="306"/>
        <end position="319"/>
    </location>
</feature>
<feature type="strand" evidence="21">
    <location>
        <begin position="324"/>
        <end position="330"/>
    </location>
</feature>
<feature type="strand" evidence="25">
    <location>
        <begin position="332"/>
        <end position="335"/>
    </location>
</feature>
<feature type="strand" evidence="21">
    <location>
        <begin position="343"/>
        <end position="353"/>
    </location>
</feature>
<feature type="strand" evidence="21">
    <location>
        <begin position="355"/>
        <end position="359"/>
    </location>
</feature>
<feature type="helix" evidence="21">
    <location>
        <begin position="365"/>
        <end position="367"/>
    </location>
</feature>
<feature type="turn" evidence="21">
    <location>
        <begin position="379"/>
        <end position="381"/>
    </location>
</feature>
<feature type="strand" evidence="21">
    <location>
        <begin position="386"/>
        <end position="391"/>
    </location>
</feature>
<feature type="strand" evidence="21">
    <location>
        <begin position="396"/>
        <end position="399"/>
    </location>
</feature>
<feature type="strand" evidence="21">
    <location>
        <begin position="405"/>
        <end position="408"/>
    </location>
</feature>
<feature type="strand" evidence="21">
    <location>
        <begin position="415"/>
        <end position="422"/>
    </location>
</feature>
<feature type="helix" evidence="21">
    <location>
        <begin position="428"/>
        <end position="446"/>
    </location>
</feature>
<feature type="helix" evidence="21">
    <location>
        <begin position="448"/>
        <end position="451"/>
    </location>
</feature>
<feature type="helix" evidence="21">
    <location>
        <begin position="458"/>
        <end position="460"/>
    </location>
</feature>
<feature type="helix" evidence="21">
    <location>
        <begin position="464"/>
        <end position="466"/>
    </location>
</feature>
<feature type="helix" evidence="21">
    <location>
        <begin position="472"/>
        <end position="487"/>
    </location>
</feature>
<feature type="helix" evidence="21">
    <location>
        <begin position="488"/>
        <end position="491"/>
    </location>
</feature>
<feature type="helix" evidence="21">
    <location>
        <begin position="494"/>
        <end position="508"/>
    </location>
</feature>
<feature type="helix" evidence="21">
    <location>
        <begin position="516"/>
        <end position="520"/>
    </location>
</feature>
<feature type="helix" evidence="21">
    <location>
        <begin position="523"/>
        <end position="525"/>
    </location>
</feature>
<feature type="strand" evidence="24">
    <location>
        <begin position="529"/>
        <end position="531"/>
    </location>
</feature>
<feature type="strand" evidence="25">
    <location>
        <begin position="532"/>
        <end position="536"/>
    </location>
</feature>
<feature type="strand" evidence="21">
    <location>
        <begin position="547"/>
        <end position="561"/>
    </location>
</feature>
<feature type="strand" evidence="21">
    <location>
        <begin position="564"/>
        <end position="570"/>
    </location>
</feature>
<feature type="strand" evidence="21">
    <location>
        <begin position="583"/>
        <end position="587"/>
    </location>
</feature>
<feature type="helix" evidence="21">
    <location>
        <begin position="589"/>
        <end position="591"/>
    </location>
</feature>
<feature type="helix" evidence="21">
    <location>
        <begin position="592"/>
        <end position="600"/>
    </location>
</feature>
<feature type="turn" evidence="23">
    <location>
        <begin position="601"/>
        <end position="603"/>
    </location>
</feature>
<feature type="helix" evidence="21">
    <location>
        <begin position="608"/>
        <end position="610"/>
    </location>
</feature>
<feature type="strand" evidence="22">
    <location>
        <begin position="612"/>
        <end position="615"/>
    </location>
</feature>
<feature type="helix" evidence="21">
    <location>
        <begin position="616"/>
        <end position="628"/>
    </location>
</feature>
<feature type="strand" evidence="21">
    <location>
        <begin position="632"/>
        <end position="636"/>
    </location>
</feature>